<organism>
    <name type="scientific">Pyrobaculum neutrophilum (strain DSM 2338 / JCM 9278 / NBRC 100436 / V24Sta)</name>
    <name type="common">Thermoproteus neutrophilus</name>
    <dbReference type="NCBI Taxonomy" id="444157"/>
    <lineage>
        <taxon>Archaea</taxon>
        <taxon>Thermoproteota</taxon>
        <taxon>Thermoprotei</taxon>
        <taxon>Thermoproteales</taxon>
        <taxon>Thermoproteaceae</taxon>
        <taxon>Pyrobaculum</taxon>
    </lineage>
</organism>
<sequence length="399" mass="44327">MRVTVSIIKADVGGFPGHAHVHPKMLEYAAAKLKEAQKRGVIIDYFVYNVGDDISLLMTHTKGEDNKDIHGLAWETFKEVTDQIAKRFKLYGAGQDLLKDAFSGNIRGMGPQVAEMEFEERPSEPIIAFAADKTEPGAFNLPLYKMFADPFTTAGLVIDPSMHEGFIFEVLDVVEHKVYLLKTPEDAYSLLGLIGTTGRYIIRKVFRRADGAPAAANSVERLSLIAGRYVGKDDPVLLVRAQSGLPAVGEVLEAFAHPHLVHGWMRGSHAGPLMPARFISVDPERRIAIGPKMTRFDGPPKVGALGFQLHEGYLEGGVDLFDDPAFDYVRQTAAQIADYIRRMGPFQPHRLPPEEMEYTALPKILAKVKPYPADQYEKDRKKYIEAVVKGAKVEESQHD</sequence>
<evidence type="ECO:0000250" key="1">
    <source>
        <dbReference type="UniProtKB" id="F9VMT6"/>
    </source>
</evidence>
<evidence type="ECO:0000255" key="2">
    <source>
        <dbReference type="HAMAP-Rule" id="MF_02067"/>
    </source>
</evidence>
<evidence type="ECO:0000269" key="3">
    <source>
    </source>
</evidence>
<evidence type="ECO:0000269" key="4">
    <source>
    </source>
</evidence>
<evidence type="ECO:0000303" key="5">
    <source>
    </source>
</evidence>
<evidence type="ECO:0000303" key="6">
    <source>
    </source>
</evidence>
<evidence type="ECO:0000305" key="7"/>
<evidence type="ECO:0000305" key="8">
    <source>
    </source>
</evidence>
<evidence type="ECO:0000305" key="9">
    <source>
    </source>
</evidence>
<evidence type="ECO:0000312" key="10">
    <source>
        <dbReference type="EMBL" id="ACB39090.1"/>
    </source>
</evidence>
<evidence type="ECO:0007744" key="11">
    <source>
        <dbReference type="PDB" id="3T2B"/>
    </source>
</evidence>
<evidence type="ECO:0007744" key="12">
    <source>
        <dbReference type="PDB" id="3T2C"/>
    </source>
</evidence>
<evidence type="ECO:0007744" key="13">
    <source>
        <dbReference type="PDB" id="3T2D"/>
    </source>
</evidence>
<evidence type="ECO:0007744" key="14">
    <source>
        <dbReference type="PDB" id="3T2E"/>
    </source>
</evidence>
<evidence type="ECO:0007744" key="15">
    <source>
        <dbReference type="PDB" id="3T2F"/>
    </source>
</evidence>
<evidence type="ECO:0007744" key="16">
    <source>
        <dbReference type="PDB" id="3T2G"/>
    </source>
</evidence>
<evidence type="ECO:0007829" key="17">
    <source>
        <dbReference type="PDB" id="3T2C"/>
    </source>
</evidence>
<evidence type="ECO:0007829" key="18">
    <source>
        <dbReference type="PDB" id="3T2D"/>
    </source>
</evidence>
<evidence type="ECO:0007829" key="19">
    <source>
        <dbReference type="PDB" id="3T2E"/>
    </source>
</evidence>
<evidence type="ECO:0007829" key="20">
    <source>
        <dbReference type="PDB" id="3T2G"/>
    </source>
</evidence>
<comment type="function">
    <text evidence="3 4">Catalyzes two subsequent steps in gluconeogenesis: the aldol condensation of dihydroxyacetone phosphate (DHAP) and glyceraldehyde-3-phosphate (GA3P) to fructose-1,6-bisphosphate (FBP), and the dephosphorylation of FBP to fructose-6-phosphate (F6P).</text>
</comment>
<comment type="catalytic activity">
    <reaction evidence="3 4">
        <text>beta-D-fructose 1,6-bisphosphate + H2O = beta-D-fructose 6-phosphate + phosphate</text>
        <dbReference type="Rhea" id="RHEA:11064"/>
        <dbReference type="ChEBI" id="CHEBI:15377"/>
        <dbReference type="ChEBI" id="CHEBI:32966"/>
        <dbReference type="ChEBI" id="CHEBI:43474"/>
        <dbReference type="ChEBI" id="CHEBI:57634"/>
        <dbReference type="EC" id="3.1.3.11"/>
    </reaction>
</comment>
<comment type="catalytic activity">
    <reaction evidence="3 4">
        <text>beta-D-fructose 1,6-bisphosphate = D-glyceraldehyde 3-phosphate + dihydroxyacetone phosphate</text>
        <dbReference type="Rhea" id="RHEA:14729"/>
        <dbReference type="ChEBI" id="CHEBI:32966"/>
        <dbReference type="ChEBI" id="CHEBI:57642"/>
        <dbReference type="ChEBI" id="CHEBI:59776"/>
        <dbReference type="EC" id="4.1.2.13"/>
    </reaction>
</comment>
<comment type="cofactor">
    <cofactor evidence="4">
        <name>Mg(2+)</name>
        <dbReference type="ChEBI" id="CHEBI:18420"/>
    </cofactor>
</comment>
<comment type="pathway">
    <text evidence="8">Carbohydrate biosynthesis; gluconeogenesis.</text>
</comment>
<comment type="subunit">
    <text evidence="4">Homooctamer; dimer of tetramers.</text>
</comment>
<comment type="domain">
    <text evidence="4">Consists of a single catalytic domain, but remodels its active-site architecture via a large structural change to exhibit dual activities.</text>
</comment>
<comment type="similarity">
    <text evidence="2 7">Belongs to the FBP aldolase/phosphatase family.</text>
</comment>
<protein>
    <recommendedName>
        <fullName evidence="5 6">Fructose-1,6-bisphosphate aldolase/phosphatase</fullName>
        <shortName evidence="2">FBP A/P</shortName>
        <shortName evidence="5 6">FBP aldolase/phosphatase</shortName>
        <ecNumber evidence="3 4">3.1.3.11</ecNumber>
        <ecNumber evidence="3 4">4.1.2.13</ecNumber>
    </recommendedName>
</protein>
<keyword id="KW-0002">3D-structure</keyword>
<keyword id="KW-0119">Carbohydrate metabolism</keyword>
<keyword id="KW-0312">Gluconeogenesis</keyword>
<keyword id="KW-0378">Hydrolase</keyword>
<keyword id="KW-0456">Lyase</keyword>
<keyword id="KW-0460">Magnesium</keyword>
<keyword id="KW-0479">Metal-binding</keyword>
<keyword id="KW-0704">Schiff base</keyword>
<reference key="1">
    <citation type="submission" date="2008-03" db="EMBL/GenBank/DDBJ databases">
        <title>Complete sequence of Thermoproteus neutrophilus V24Sta.</title>
        <authorList>
            <consortium name="US DOE Joint Genome Institute"/>
            <person name="Copeland A."/>
            <person name="Lucas S."/>
            <person name="Lapidus A."/>
            <person name="Glavina del Rio T."/>
            <person name="Dalin E."/>
            <person name="Tice H."/>
            <person name="Bruce D."/>
            <person name="Goodwin L."/>
            <person name="Pitluck S."/>
            <person name="Sims D."/>
            <person name="Brettin T."/>
            <person name="Detter J.C."/>
            <person name="Han C."/>
            <person name="Kuske C.R."/>
            <person name="Schmutz J."/>
            <person name="Larimer F."/>
            <person name="Land M."/>
            <person name="Hauser L."/>
            <person name="Kyrpides N."/>
            <person name="Mikhailova N."/>
            <person name="Biddle J.F."/>
            <person name="Zhang Z."/>
            <person name="Fitz-Gibbon S.T."/>
            <person name="Lowe T.M."/>
            <person name="Saltikov C."/>
            <person name="House C.H."/>
            <person name="Richardson P."/>
        </authorList>
    </citation>
    <scope>NUCLEOTIDE SEQUENCE [LARGE SCALE GENOMIC DNA]</scope>
    <source>
        <strain>DSM 2338 / JCM 9278 / NBRC 100436 / V24Sta</strain>
    </source>
</reference>
<reference key="2">
    <citation type="journal article" date="2010" name="Nature">
        <title>Fructose 1,6-bisphosphate aldolase/phosphatase may be an ancestral gluconeogenic enzyme.</title>
        <authorList>
            <person name="Say R.F."/>
            <person name="Fuchs G."/>
        </authorList>
    </citation>
    <scope>FUNCTION AS BOTH FBPASE AND FBP ALDOLASE</scope>
    <scope>CATALYTIC ACTIVITY</scope>
    <scope>PATHWAY</scope>
    <source>
        <strain>DSM 2338 / JCM 9278 / NBRC 100436 / V24Sta</strain>
    </source>
</reference>
<reference evidence="11 12 13 14 15 16" key="3">
    <citation type="journal article" date="2011" name="Nature">
        <title>Active-site remodelling in the bifunctional fructose-1,6-bisphosphate aldolase/phosphatase.</title>
        <authorList>
            <person name="Du J."/>
            <person name="Say R.F."/>
            <person name="Lu W."/>
            <person name="Fuchs G."/>
            <person name="Einsle O."/>
        </authorList>
    </citation>
    <scope>X-RAY CRYSTALLOGRAPHY (1.30 ANGSTROMS) OF WILD-TYPE AND MUTANT PHE-229 IN COMPLEXES WITH MAGNESIUM; DHAP; FBP AND F6P</scope>
    <scope>FUNCTION AS BOTH FBPASE AND FBP ALDOLASE</scope>
    <scope>CATALYTIC ACTIVITY</scope>
    <scope>COFACTOR</scope>
    <scope>DOMAIN</scope>
    <scope>MUTAGENESIS OF TYR-229 AND ASP-297</scope>
    <scope>REACTION MECHANISM</scope>
    <scope>ACTIVE SITE</scope>
    <scope>SCHIFF BASE FORMATION WITH DHAP</scope>
    <scope>SUBUNIT</scope>
</reference>
<gene>
    <name evidence="2" type="primary">fbp</name>
    <name evidence="10" type="ordered locus">Tneu_0133</name>
</gene>
<dbReference type="EC" id="3.1.3.11" evidence="3 4"/>
<dbReference type="EC" id="4.1.2.13" evidence="3 4"/>
<dbReference type="EMBL" id="CP001014">
    <property type="protein sequence ID" value="ACB39090.1"/>
    <property type="molecule type" value="Genomic_DNA"/>
</dbReference>
<dbReference type="RefSeq" id="WP_012349511.1">
    <property type="nucleotide sequence ID" value="NC_010525.1"/>
</dbReference>
<dbReference type="PDB" id="3T2B">
    <property type="method" value="X-ray"/>
    <property type="resolution" value="1.52 A"/>
    <property type="chains" value="A=1-399"/>
</dbReference>
<dbReference type="PDB" id="3T2C">
    <property type="method" value="X-ray"/>
    <property type="resolution" value="1.30 A"/>
    <property type="chains" value="A=1-399"/>
</dbReference>
<dbReference type="PDB" id="3T2D">
    <property type="method" value="X-ray"/>
    <property type="resolution" value="1.36 A"/>
    <property type="chains" value="A=1-399"/>
</dbReference>
<dbReference type="PDB" id="3T2E">
    <property type="method" value="X-ray"/>
    <property type="resolution" value="1.66 A"/>
    <property type="chains" value="A=1-399"/>
</dbReference>
<dbReference type="PDB" id="3T2F">
    <property type="method" value="X-ray"/>
    <property type="resolution" value="1.90 A"/>
    <property type="chains" value="A=1-399"/>
</dbReference>
<dbReference type="PDB" id="3T2G">
    <property type="method" value="X-ray"/>
    <property type="resolution" value="3.00 A"/>
    <property type="chains" value="A=1-399"/>
</dbReference>
<dbReference type="PDBsum" id="3T2B"/>
<dbReference type="PDBsum" id="3T2C"/>
<dbReference type="PDBsum" id="3T2D"/>
<dbReference type="PDBsum" id="3T2E"/>
<dbReference type="PDBsum" id="3T2F"/>
<dbReference type="PDBsum" id="3T2G"/>
<dbReference type="SMR" id="B1YAL1"/>
<dbReference type="DIP" id="DIP-59163N"/>
<dbReference type="STRING" id="444157.Tneu_0133"/>
<dbReference type="MoonProt" id="B1YAL1"/>
<dbReference type="GeneID" id="6164372"/>
<dbReference type="KEGG" id="tne:Tneu_0133"/>
<dbReference type="eggNOG" id="arCOG04180">
    <property type="taxonomic scope" value="Archaea"/>
</dbReference>
<dbReference type="HOGENOM" id="CLU_041630_0_0_2"/>
<dbReference type="OrthoDB" id="5829at2157"/>
<dbReference type="BRENDA" id="3.1.3.11">
    <property type="organism ID" value="6328"/>
</dbReference>
<dbReference type="BRENDA" id="4.1.2.13">
    <property type="organism ID" value="6328"/>
</dbReference>
<dbReference type="UniPathway" id="UPA00138"/>
<dbReference type="EvolutionaryTrace" id="B1YAL1"/>
<dbReference type="Proteomes" id="UP000001694">
    <property type="component" value="Chromosome"/>
</dbReference>
<dbReference type="GO" id="GO:0042132">
    <property type="term" value="F:fructose 1,6-bisphosphate 1-phosphatase activity"/>
    <property type="evidence" value="ECO:0007669"/>
    <property type="project" value="UniProtKB-UniRule"/>
</dbReference>
<dbReference type="GO" id="GO:0004332">
    <property type="term" value="F:fructose-bisphosphate aldolase activity"/>
    <property type="evidence" value="ECO:0007669"/>
    <property type="project" value="UniProtKB-UniRule"/>
</dbReference>
<dbReference type="GO" id="GO:0000287">
    <property type="term" value="F:magnesium ion binding"/>
    <property type="evidence" value="ECO:0007669"/>
    <property type="project" value="UniProtKB-UniRule"/>
</dbReference>
<dbReference type="GO" id="GO:0006094">
    <property type="term" value="P:gluconeogenesis"/>
    <property type="evidence" value="ECO:0007669"/>
    <property type="project" value="UniProtKB-UniRule"/>
</dbReference>
<dbReference type="Gene3D" id="6.10.250.1180">
    <property type="match status" value="1"/>
</dbReference>
<dbReference type="HAMAP" id="MF_02067">
    <property type="entry name" value="FBP_aldolase_phosphatase"/>
    <property type="match status" value="1"/>
</dbReference>
<dbReference type="InterPro" id="IPR002803">
    <property type="entry name" value="FBPase_V"/>
</dbReference>
<dbReference type="InterPro" id="IPR036076">
    <property type="entry name" value="FBPase_V_sf"/>
</dbReference>
<dbReference type="NCBIfam" id="NF041126">
    <property type="entry name" value="FBP_aldo_phos"/>
    <property type="match status" value="1"/>
</dbReference>
<dbReference type="PANTHER" id="PTHR38341">
    <property type="entry name" value="FRUCTOSE-1,6-BISPHOSPHATE ALDOLASE/PHOSPHATASE"/>
    <property type="match status" value="1"/>
</dbReference>
<dbReference type="PANTHER" id="PTHR38341:SF1">
    <property type="entry name" value="FRUCTOSE-1,6-BISPHOSPHATE ALDOLASE_PHOSPHATASE"/>
    <property type="match status" value="1"/>
</dbReference>
<dbReference type="Pfam" id="PF01950">
    <property type="entry name" value="FBPase_3"/>
    <property type="match status" value="1"/>
</dbReference>
<dbReference type="PIRSF" id="PIRSF015647">
    <property type="entry name" value="FBPtase_archl"/>
    <property type="match status" value="1"/>
</dbReference>
<dbReference type="SUPFAM" id="SSF111249">
    <property type="entry name" value="Sulfolobus fructose-1,6-bisphosphatase-like"/>
    <property type="match status" value="1"/>
</dbReference>
<accession>B1YAL1</accession>
<name>FBPAP_PYRNV</name>
<feature type="chain" id="PRO_0000437183" description="Fructose-1,6-bisphosphate aldolase/phosphatase">
    <location>
        <begin position="1"/>
        <end position="399"/>
    </location>
</feature>
<feature type="active site" description="Proton acceptor; for FBP phosphatase activity" evidence="1">
    <location>
        <position position="11"/>
    </location>
</feature>
<feature type="active site" description="Proton donor/acceptor; for FBP aldolase activity" evidence="9">
    <location>
        <position position="229"/>
    </location>
</feature>
<feature type="active site" description="Schiff-base intermediate with DHAP; for FBP aldolase activity" evidence="4">
    <location>
        <position position="232"/>
    </location>
</feature>
<feature type="binding site" evidence="4 11 12 13">
    <location>
        <position position="11"/>
    </location>
    <ligand>
        <name>Mg(2+)</name>
        <dbReference type="ChEBI" id="CHEBI:18420"/>
        <label>1</label>
    </ligand>
</feature>
<feature type="binding site" description="in other chain" evidence="4 13">
    <location>
        <position position="18"/>
    </location>
    <ligand>
        <name>beta-D-fructose 1,6-bisphosphate</name>
        <dbReference type="ChEBI" id="CHEBI:32966"/>
        <note>ligand shared between dimeric partners</note>
    </ligand>
</feature>
<feature type="binding site" evidence="4 12">
    <location>
        <position position="18"/>
    </location>
    <ligand>
        <name>dihydroxyacetone phosphate</name>
        <dbReference type="ChEBI" id="CHEBI:57642"/>
    </ligand>
</feature>
<feature type="binding site" evidence="4 11 12 13">
    <location>
        <position position="18"/>
    </location>
    <ligand>
        <name>Mg(2+)</name>
        <dbReference type="ChEBI" id="CHEBI:18420"/>
        <label>1</label>
    </ligand>
</feature>
<feature type="binding site" evidence="4 11 12 13">
    <location>
        <position position="52"/>
    </location>
    <ligand>
        <name>Mg(2+)</name>
        <dbReference type="ChEBI" id="CHEBI:18420"/>
        <label>1</label>
    </ligand>
</feature>
<feature type="binding site" evidence="4 11 12 13">
    <location>
        <position position="52"/>
    </location>
    <ligand>
        <name>Mg(2+)</name>
        <dbReference type="ChEBI" id="CHEBI:18420"/>
        <label>2</label>
    </ligand>
</feature>
<feature type="binding site" evidence="4 11 12 13">
    <location>
        <position position="53"/>
    </location>
    <ligand>
        <name>Mg(2+)</name>
        <dbReference type="ChEBI" id="CHEBI:18420"/>
        <label>2</label>
    </ligand>
</feature>
<feature type="binding site" description="in other chain" evidence="4 13">
    <location>
        <position position="91"/>
    </location>
    <ligand>
        <name>beta-D-fructose 1,6-bisphosphate</name>
        <dbReference type="ChEBI" id="CHEBI:32966"/>
        <note>ligand shared between dimeric partners</note>
    </ligand>
</feature>
<feature type="binding site" evidence="4 12 13 14">
    <location>
        <position position="95"/>
    </location>
    <ligand>
        <name>Mg(2+)</name>
        <dbReference type="ChEBI" id="CHEBI:18420"/>
        <label>1</label>
    </ligand>
</feature>
<feature type="binding site" description="in other chain" evidence="4 13">
    <location>
        <begin position="104"/>
        <end position="105"/>
    </location>
    <ligand>
        <name>beta-D-fructose 1,6-bisphosphate</name>
        <dbReference type="ChEBI" id="CHEBI:32966"/>
        <note>ligand shared between dimeric partners</note>
    </ligand>
</feature>
<feature type="binding site" evidence="4 11 12 13">
    <location>
        <position position="132"/>
    </location>
    <ligand>
        <name>Mg(2+)</name>
        <dbReference type="ChEBI" id="CHEBI:18420"/>
        <label>2</label>
    </ligand>
</feature>
<feature type="binding site" description="in other chain" evidence="4 13">
    <location>
        <position position="133"/>
    </location>
    <ligand>
        <name>beta-D-fructose 1,6-bisphosphate</name>
        <dbReference type="ChEBI" id="CHEBI:32966"/>
        <note>ligand shared between dimeric partners</note>
    </ligand>
</feature>
<feature type="binding site" evidence="4 12">
    <location>
        <position position="133"/>
    </location>
    <ligand>
        <name>dihydroxyacetone phosphate</name>
        <dbReference type="ChEBI" id="CHEBI:57642"/>
    </ligand>
</feature>
<feature type="binding site" evidence="1">
    <location>
        <position position="232"/>
    </location>
    <ligand>
        <name>Mg(2+)</name>
        <dbReference type="ChEBI" id="CHEBI:18420"/>
        <label>3</label>
    </ligand>
</feature>
<feature type="binding site" evidence="4">
    <location>
        <position position="233"/>
    </location>
    <ligand>
        <name>Mg(2+)</name>
        <dbReference type="ChEBI" id="CHEBI:18420"/>
        <label>3</label>
    </ligand>
</feature>
<feature type="binding site" evidence="4">
    <location>
        <position position="233"/>
    </location>
    <ligand>
        <name>Mg(2+)</name>
        <dbReference type="ChEBI" id="CHEBI:18420"/>
        <label>4</label>
    </ligand>
</feature>
<feature type="binding site" evidence="4 11 12 13">
    <location>
        <position position="234"/>
    </location>
    <ligand>
        <name>Mg(2+)</name>
        <dbReference type="ChEBI" id="CHEBI:18420"/>
        <label>2</label>
    </ligand>
</feature>
<feature type="binding site" evidence="4">
    <location>
        <position position="234"/>
    </location>
    <ligand>
        <name>Mg(2+)</name>
        <dbReference type="ChEBI" id="CHEBI:18420"/>
        <label>3</label>
    </ligand>
</feature>
<feature type="binding site" evidence="4">
    <location>
        <begin position="242"/>
        <end position="243"/>
    </location>
    <ligand>
        <name>beta-D-fructose 1,6-bisphosphate</name>
        <dbReference type="ChEBI" id="CHEBI:32966"/>
        <note>ligand shared between dimeric partners</note>
    </ligand>
</feature>
<feature type="binding site" description="in other chain" evidence="4 13">
    <location>
        <position position="266"/>
    </location>
    <ligand>
        <name>beta-D-fructose 1,6-bisphosphate</name>
        <dbReference type="ChEBI" id="CHEBI:32966"/>
        <note>ligand shared between dimeric partners</note>
    </ligand>
</feature>
<feature type="binding site" evidence="4 12">
    <location>
        <position position="266"/>
    </location>
    <ligand>
        <name>dihydroxyacetone phosphate</name>
        <dbReference type="ChEBI" id="CHEBI:57642"/>
    </ligand>
</feature>
<feature type="binding site" description="in other chain" evidence="4 13">
    <location>
        <position position="297"/>
    </location>
    <ligand>
        <name>beta-D-fructose 1,6-bisphosphate</name>
        <dbReference type="ChEBI" id="CHEBI:32966"/>
        <note>ligand shared between dimeric partners</note>
    </ligand>
</feature>
<feature type="binding site" evidence="4 12">
    <location>
        <position position="297"/>
    </location>
    <ligand>
        <name>dihydroxyacetone phosphate</name>
        <dbReference type="ChEBI" id="CHEBI:57642"/>
    </ligand>
</feature>
<feature type="binding site" description="in other chain" evidence="4 13">
    <location>
        <position position="358"/>
    </location>
    <ligand>
        <name>beta-D-fructose 1,6-bisphosphate</name>
        <dbReference type="ChEBI" id="CHEBI:32966"/>
        <note>ligand shared between dimeric partners</note>
    </ligand>
</feature>
<feature type="mutagenesis site" description="Shows unaltered FBP phosphatase activity, whereas FBP aldolase activity is completely abolished." evidence="4">
    <original>Y</original>
    <variation>F</variation>
    <location>
        <position position="229"/>
    </location>
</feature>
<feature type="mutagenesis site" description="18-fold decrease in FBP phosphatase activity, whereas FBP aldolase activity is completely abolished." evidence="4">
    <original>D</original>
    <variation>N</variation>
    <location>
        <position position="297"/>
    </location>
</feature>
<feature type="strand" evidence="17">
    <location>
        <begin position="2"/>
        <end position="10"/>
    </location>
</feature>
<feature type="strand" evidence="17">
    <location>
        <begin position="14"/>
        <end position="16"/>
    </location>
</feature>
<feature type="helix" evidence="17">
    <location>
        <begin position="23"/>
        <end position="38"/>
    </location>
</feature>
<feature type="strand" evidence="17">
    <location>
        <begin position="43"/>
        <end position="50"/>
    </location>
</feature>
<feature type="strand" evidence="17">
    <location>
        <begin position="53"/>
        <end position="62"/>
    </location>
</feature>
<feature type="helix" evidence="17">
    <location>
        <begin position="67"/>
        <end position="83"/>
    </location>
</feature>
<feature type="turn" evidence="17">
    <location>
        <begin position="84"/>
        <end position="89"/>
    </location>
</feature>
<feature type="turn" evidence="17">
    <location>
        <begin position="92"/>
        <end position="96"/>
    </location>
</feature>
<feature type="strand" evidence="19">
    <location>
        <begin position="99"/>
        <end position="101"/>
    </location>
</feature>
<feature type="strand" evidence="18">
    <location>
        <begin position="102"/>
        <end position="105"/>
    </location>
</feature>
<feature type="strand" evidence="17">
    <location>
        <begin position="112"/>
        <end position="119"/>
    </location>
</feature>
<feature type="strand" evidence="17">
    <location>
        <begin position="122"/>
        <end position="134"/>
    </location>
</feature>
<feature type="helix" evidence="17">
    <location>
        <begin position="136"/>
        <end position="139"/>
    </location>
</feature>
<feature type="helix" evidence="17">
    <location>
        <begin position="140"/>
        <end position="148"/>
    </location>
</feature>
<feature type="turn" evidence="17">
    <location>
        <begin position="150"/>
        <end position="152"/>
    </location>
</feature>
<feature type="helix" evidence="17">
    <location>
        <begin position="155"/>
        <end position="158"/>
    </location>
</feature>
<feature type="turn" evidence="17">
    <location>
        <begin position="160"/>
        <end position="164"/>
    </location>
</feature>
<feature type="strand" evidence="17">
    <location>
        <begin position="166"/>
        <end position="172"/>
    </location>
</feature>
<feature type="turn" evidence="17">
    <location>
        <begin position="173"/>
        <end position="176"/>
    </location>
</feature>
<feature type="strand" evidence="17">
    <location>
        <begin position="177"/>
        <end position="183"/>
    </location>
</feature>
<feature type="turn" evidence="17">
    <location>
        <begin position="184"/>
        <end position="186"/>
    </location>
</feature>
<feature type="helix" evidence="17">
    <location>
        <begin position="187"/>
        <end position="194"/>
    </location>
</feature>
<feature type="turn" evidence="17">
    <location>
        <begin position="197"/>
        <end position="199"/>
    </location>
</feature>
<feature type="strand" evidence="17">
    <location>
        <begin position="200"/>
        <end position="207"/>
    </location>
</feature>
<feature type="turn" evidence="17">
    <location>
        <begin position="208"/>
        <end position="210"/>
    </location>
</feature>
<feature type="strand" evidence="17">
    <location>
        <begin position="213"/>
        <end position="217"/>
    </location>
</feature>
<feature type="helix" evidence="17">
    <location>
        <begin position="222"/>
        <end position="226"/>
    </location>
</feature>
<feature type="strand" evidence="18">
    <location>
        <begin position="228"/>
        <end position="230"/>
    </location>
</feature>
<feature type="strand" evidence="17">
    <location>
        <begin position="236"/>
        <end position="240"/>
    </location>
</feature>
<feature type="strand" evidence="20">
    <location>
        <begin position="242"/>
        <end position="245"/>
    </location>
</feature>
<feature type="helix" evidence="17">
    <location>
        <begin position="248"/>
        <end position="253"/>
    </location>
</feature>
<feature type="strand" evidence="17">
    <location>
        <begin position="260"/>
        <end position="264"/>
    </location>
</feature>
<feature type="helix" evidence="17">
    <location>
        <begin position="265"/>
        <end position="267"/>
    </location>
</feature>
<feature type="strand" evidence="17">
    <location>
        <begin position="269"/>
        <end position="272"/>
    </location>
</feature>
<feature type="strand" evidence="17">
    <location>
        <begin position="279"/>
        <end position="282"/>
    </location>
</feature>
<feature type="turn" evidence="17">
    <location>
        <begin position="283"/>
        <end position="286"/>
    </location>
</feature>
<feature type="strand" evidence="17">
    <location>
        <begin position="287"/>
        <end position="289"/>
    </location>
</feature>
<feature type="helix" evidence="17">
    <location>
        <begin position="295"/>
        <end position="297"/>
    </location>
</feature>
<feature type="strand" evidence="17">
    <location>
        <begin position="301"/>
        <end position="310"/>
    </location>
</feature>
<feature type="strand" evidence="17">
    <location>
        <begin position="313"/>
        <end position="319"/>
    </location>
</feature>
<feature type="helix" evidence="17">
    <location>
        <begin position="324"/>
        <end position="341"/>
    </location>
</feature>
<feature type="turn" evidence="18">
    <location>
        <begin position="342"/>
        <end position="345"/>
    </location>
</feature>
<feature type="turn" evidence="17">
    <location>
        <begin position="347"/>
        <end position="349"/>
    </location>
</feature>
<feature type="helix" evidence="17">
    <location>
        <begin position="353"/>
        <end position="356"/>
    </location>
</feature>
<feature type="helix" evidence="17">
    <location>
        <begin position="361"/>
        <end position="366"/>
    </location>
</feature>
<feature type="helix" evidence="17">
    <location>
        <begin position="373"/>
        <end position="388"/>
    </location>
</feature>
<proteinExistence type="evidence at protein level"/>